<name>P10_BPPH6</name>
<feature type="chain" id="PRO_0000164644" description="Envelope protein P10">
    <location>
        <begin position="1"/>
        <end position="42"/>
    </location>
</feature>
<feature type="transmembrane region" description="Helical" evidence="1">
    <location>
        <begin position="20"/>
        <end position="40"/>
    </location>
</feature>
<evidence type="ECO:0000255" key="1"/>
<evidence type="ECO:0000269" key="2">
    <source>
    </source>
</evidence>
<evidence type="ECO:0000305" key="3"/>
<protein>
    <recommendedName>
        <fullName>Envelope protein P10</fullName>
    </recommendedName>
</protein>
<proteinExistence type="predicted"/>
<organismHost>
    <name type="scientific">Pseudomonas savastanoi pv. phaseolicola</name>
    <name type="common">Pseudomonas syringae pv. phaseolicola</name>
    <dbReference type="NCBI Taxonomy" id="319"/>
</organismHost>
<keyword id="KW-0204">Cytolysis</keyword>
<keyword id="KW-0578">Host cell lysis by virus</keyword>
<keyword id="KW-0472">Membrane</keyword>
<keyword id="KW-1185">Reference proteome</keyword>
<keyword id="KW-0812">Transmembrane</keyword>
<keyword id="KW-1133">Transmembrane helix</keyword>
<keyword id="KW-0261">Viral envelope protein</keyword>
<keyword id="KW-1188">Viral release from host cell</keyword>
<keyword id="KW-0946">Virion</keyword>
<comment type="function">
    <text evidence="2">Involved in cell lysis.</text>
</comment>
<comment type="subcellular location">
    <subcellularLocation>
        <location evidence="3">Virion membrane</location>
        <topology evidence="3">Single-pass membrane protein</topology>
    </subcellularLocation>
</comment>
<gene>
    <name type="primary">P10</name>
</gene>
<accession>P11127</accession>
<sequence>MDNILDPLKAPFSSEAAAKTTAAKIAVVYALVGLVGGLLLTK</sequence>
<dbReference type="EMBL" id="M17462">
    <property type="protein sequence ID" value="AAA68483.1"/>
    <property type="molecule type" value="Genomic_RNA"/>
</dbReference>
<dbReference type="PIR" id="A28648">
    <property type="entry name" value="PTBPF6"/>
</dbReference>
<dbReference type="RefSeq" id="NP_620349.1">
    <property type="nucleotide sequence ID" value="NC_003716.1"/>
</dbReference>
<dbReference type="SMR" id="P11127"/>
<dbReference type="KEGG" id="vg:956439"/>
<dbReference type="Proteomes" id="UP000002610">
    <property type="component" value="Genome"/>
</dbReference>
<dbReference type="GO" id="GO:0044384">
    <property type="term" value="C:host outer membrane"/>
    <property type="evidence" value="ECO:0000314"/>
    <property type="project" value="CACAO"/>
</dbReference>
<dbReference type="GO" id="GO:0016020">
    <property type="term" value="C:membrane"/>
    <property type="evidence" value="ECO:0007669"/>
    <property type="project" value="UniProtKB-KW"/>
</dbReference>
<dbReference type="GO" id="GO:0019031">
    <property type="term" value="C:viral envelope"/>
    <property type="evidence" value="ECO:0007669"/>
    <property type="project" value="UniProtKB-KW"/>
</dbReference>
<dbReference type="GO" id="GO:0055036">
    <property type="term" value="C:virion membrane"/>
    <property type="evidence" value="ECO:0007669"/>
    <property type="project" value="UniProtKB-SubCell"/>
</dbReference>
<dbReference type="GO" id="GO:0031640">
    <property type="term" value="P:killing of cells of another organism"/>
    <property type="evidence" value="ECO:0007669"/>
    <property type="project" value="UniProtKB-KW"/>
</dbReference>
<organism>
    <name type="scientific">Pseudomonas phage phi6</name>
    <name type="common">Bacteriophage phi-6</name>
    <dbReference type="NCBI Taxonomy" id="2928686"/>
    <lineage>
        <taxon>Viruses</taxon>
        <taxon>Riboviria</taxon>
        <taxon>Orthornavirae</taxon>
        <taxon>Duplornaviricota</taxon>
        <taxon>Vidaverviricetes</taxon>
        <taxon>Mindivirales</taxon>
        <taxon>Cystoviridae</taxon>
        <taxon>Cystovirus</taxon>
        <taxon>Cystovirus phi6</taxon>
    </lineage>
</organism>
<reference key="1">
    <citation type="journal article" date="1988" name="Virology">
        <title>Nucleotide sequence of the middle dsRNA segment of bacteriophage phi 6: placement of the genes of membrane-associated proteins.</title>
        <authorList>
            <person name="Gottlieb P."/>
            <person name="Metzger S."/>
            <person name="Romantschuk M."/>
            <person name="Carton J."/>
            <person name="Strassman J."/>
            <person name="Bamford D.H."/>
            <person name="Kalkkinen N."/>
            <person name="Mindich L."/>
        </authorList>
    </citation>
    <scope>NUCLEOTIDE SEQUENCE [GENOMIC RNA]</scope>
</reference>
<reference key="2">
    <citation type="journal article" date="1994" name="J. Virol.">
        <title>Isolation and characterization of nonsense mutations in gene 10 of bacteriophage phi 6.</title>
        <authorList>
            <person name="Johnson M.D. III"/>
            <person name="Mindich L."/>
        </authorList>
    </citation>
    <scope>FUNCTION</scope>
</reference>